<comment type="function">
    <text evidence="2">The beta subunit is responsible for the synthesis of L-tryptophan from indole and L-serine.</text>
</comment>
<comment type="catalytic activity">
    <reaction evidence="2">
        <text>(1S,2R)-1-C-(indol-3-yl)glycerol 3-phosphate + L-serine = D-glyceraldehyde 3-phosphate + L-tryptophan + H2O</text>
        <dbReference type="Rhea" id="RHEA:10532"/>
        <dbReference type="ChEBI" id="CHEBI:15377"/>
        <dbReference type="ChEBI" id="CHEBI:33384"/>
        <dbReference type="ChEBI" id="CHEBI:57912"/>
        <dbReference type="ChEBI" id="CHEBI:58866"/>
        <dbReference type="ChEBI" id="CHEBI:59776"/>
        <dbReference type="EC" id="4.2.1.20"/>
    </reaction>
</comment>
<comment type="cofactor">
    <cofactor evidence="2">
        <name>pyridoxal 5'-phosphate</name>
        <dbReference type="ChEBI" id="CHEBI:597326"/>
    </cofactor>
</comment>
<comment type="pathway">
    <text evidence="2">Amino-acid biosynthesis; L-tryptophan biosynthesis; L-tryptophan from chorismate: step 5/5.</text>
</comment>
<comment type="subunit">
    <text evidence="2">Tetramer of two alpha and two beta chains.</text>
</comment>
<comment type="similarity">
    <text evidence="2">Belongs to the TrpB family.</text>
</comment>
<feature type="initiator methionine" description="Removed" evidence="1">
    <location>
        <position position="1"/>
    </location>
</feature>
<feature type="chain" id="PRO_0000098949" description="Tryptophan synthase beta chain">
    <location>
        <begin position="2"/>
        <end position="397"/>
    </location>
</feature>
<feature type="modified residue" description="N6-(pyridoxal phosphate)lysine" evidence="2">
    <location>
        <position position="87"/>
    </location>
</feature>
<accession>Q8X7B6</accession>
<name>TRPB_ECO57</name>
<reference key="1">
    <citation type="journal article" date="2001" name="Nature">
        <title>Genome sequence of enterohaemorrhagic Escherichia coli O157:H7.</title>
        <authorList>
            <person name="Perna N.T."/>
            <person name="Plunkett G. III"/>
            <person name="Burland V."/>
            <person name="Mau B."/>
            <person name="Glasner J.D."/>
            <person name="Rose D.J."/>
            <person name="Mayhew G.F."/>
            <person name="Evans P.S."/>
            <person name="Gregor J."/>
            <person name="Kirkpatrick H.A."/>
            <person name="Posfai G."/>
            <person name="Hackett J."/>
            <person name="Klink S."/>
            <person name="Boutin A."/>
            <person name="Shao Y."/>
            <person name="Miller L."/>
            <person name="Grotbeck E.J."/>
            <person name="Davis N.W."/>
            <person name="Lim A."/>
            <person name="Dimalanta E.T."/>
            <person name="Potamousis K."/>
            <person name="Apodaca J."/>
            <person name="Anantharaman T.S."/>
            <person name="Lin J."/>
            <person name="Yen G."/>
            <person name="Schwartz D.C."/>
            <person name="Welch R.A."/>
            <person name="Blattner F.R."/>
        </authorList>
    </citation>
    <scope>NUCLEOTIDE SEQUENCE [LARGE SCALE GENOMIC DNA]</scope>
    <source>
        <strain>O157:H7 / EDL933 / ATCC 700927 / EHEC</strain>
    </source>
</reference>
<reference key="2">
    <citation type="journal article" date="2001" name="DNA Res.">
        <title>Complete genome sequence of enterohemorrhagic Escherichia coli O157:H7 and genomic comparison with a laboratory strain K-12.</title>
        <authorList>
            <person name="Hayashi T."/>
            <person name="Makino K."/>
            <person name="Ohnishi M."/>
            <person name="Kurokawa K."/>
            <person name="Ishii K."/>
            <person name="Yokoyama K."/>
            <person name="Han C.-G."/>
            <person name="Ohtsubo E."/>
            <person name="Nakayama K."/>
            <person name="Murata T."/>
            <person name="Tanaka M."/>
            <person name="Tobe T."/>
            <person name="Iida T."/>
            <person name="Takami H."/>
            <person name="Honda T."/>
            <person name="Sasakawa C."/>
            <person name="Ogasawara N."/>
            <person name="Yasunaga T."/>
            <person name="Kuhara S."/>
            <person name="Shiba T."/>
            <person name="Hattori M."/>
            <person name="Shinagawa H."/>
        </authorList>
    </citation>
    <scope>NUCLEOTIDE SEQUENCE [LARGE SCALE GENOMIC DNA]</scope>
    <source>
        <strain>O157:H7 / Sakai / RIMD 0509952 / EHEC</strain>
    </source>
</reference>
<protein>
    <recommendedName>
        <fullName evidence="2">Tryptophan synthase beta chain</fullName>
        <ecNumber evidence="2">4.2.1.20</ecNumber>
    </recommendedName>
</protein>
<proteinExistence type="inferred from homology"/>
<evidence type="ECO:0000250" key="1"/>
<evidence type="ECO:0000255" key="2">
    <source>
        <dbReference type="HAMAP-Rule" id="MF_00133"/>
    </source>
</evidence>
<organism>
    <name type="scientific">Escherichia coli O157:H7</name>
    <dbReference type="NCBI Taxonomy" id="83334"/>
    <lineage>
        <taxon>Bacteria</taxon>
        <taxon>Pseudomonadati</taxon>
        <taxon>Pseudomonadota</taxon>
        <taxon>Gammaproteobacteria</taxon>
        <taxon>Enterobacterales</taxon>
        <taxon>Enterobacteriaceae</taxon>
        <taxon>Escherichia</taxon>
    </lineage>
</organism>
<keyword id="KW-0028">Amino-acid biosynthesis</keyword>
<keyword id="KW-0057">Aromatic amino acid biosynthesis</keyword>
<keyword id="KW-0456">Lyase</keyword>
<keyword id="KW-0663">Pyridoxal phosphate</keyword>
<keyword id="KW-1185">Reference proteome</keyword>
<keyword id="KW-0822">Tryptophan biosynthesis</keyword>
<sequence length="397" mass="42997">MTTLLNPYFGEFGGMYVPQILMPALRQLEEAFVSAQKDPEFQAQFNDLLKNYAGRPTALTKCQNITAGTNTTLYLKREDLLHGGAHKTNQVLGQALLAKRMGKTEIIAETGAGQHGVASALASALLGLKCRIYMGAKDVERQSPNVFRMRLMGAEVIPVHSGSATLKDACNEALRDWSGSYETAHYMLGTAAGPHPYPTIVREFQRMIGEETKAQILEREGRLPDAVIACVGGGSNAIGMFADFINETNVGLIGVEPGGHGIETGEHGAPLKHGRVGIYFGMKAPMMQTEDGQIEESYSISAGLDFPSVGPQHAYLNSTGRADYVSITDDEALEAFKTLCLHEGIIPALESSHALAHALKMMRENPEKEQLLVVNLSGRGDKDIFTVHDILKARGEI</sequence>
<dbReference type="EC" id="4.2.1.20" evidence="2"/>
<dbReference type="EMBL" id="AE005174">
    <property type="protein sequence ID" value="AAG56555.1"/>
    <property type="molecule type" value="Genomic_DNA"/>
</dbReference>
<dbReference type="EMBL" id="BA000007">
    <property type="protein sequence ID" value="BAB35256.1"/>
    <property type="molecule type" value="Genomic_DNA"/>
</dbReference>
<dbReference type="PIR" id="A99858">
    <property type="entry name" value="A99858"/>
</dbReference>
<dbReference type="PIR" id="G85761">
    <property type="entry name" value="G85761"/>
</dbReference>
<dbReference type="RefSeq" id="NP_309860.1">
    <property type="nucleotide sequence ID" value="NC_002695.1"/>
</dbReference>
<dbReference type="RefSeq" id="WP_000209521.1">
    <property type="nucleotide sequence ID" value="NZ_VOAI01000015.1"/>
</dbReference>
<dbReference type="SMR" id="Q8X7B6"/>
<dbReference type="STRING" id="155864.Z2550"/>
<dbReference type="GeneID" id="912860"/>
<dbReference type="GeneID" id="93775380"/>
<dbReference type="KEGG" id="ece:Z2550"/>
<dbReference type="KEGG" id="ecs:ECs_1833"/>
<dbReference type="PATRIC" id="fig|386585.9.peg.1932"/>
<dbReference type="eggNOG" id="COG0133">
    <property type="taxonomic scope" value="Bacteria"/>
</dbReference>
<dbReference type="HOGENOM" id="CLU_016734_3_1_6"/>
<dbReference type="OMA" id="PLTLCQN"/>
<dbReference type="UniPathway" id="UPA00035">
    <property type="reaction ID" value="UER00044"/>
</dbReference>
<dbReference type="Proteomes" id="UP000000558">
    <property type="component" value="Chromosome"/>
</dbReference>
<dbReference type="Proteomes" id="UP000002519">
    <property type="component" value="Chromosome"/>
</dbReference>
<dbReference type="GO" id="GO:0005737">
    <property type="term" value="C:cytoplasm"/>
    <property type="evidence" value="ECO:0007669"/>
    <property type="project" value="TreeGrafter"/>
</dbReference>
<dbReference type="GO" id="GO:0004834">
    <property type="term" value="F:tryptophan synthase activity"/>
    <property type="evidence" value="ECO:0007669"/>
    <property type="project" value="UniProtKB-UniRule"/>
</dbReference>
<dbReference type="CDD" id="cd06446">
    <property type="entry name" value="Trp-synth_B"/>
    <property type="match status" value="1"/>
</dbReference>
<dbReference type="FunFam" id="3.40.50.1100:FF:000001">
    <property type="entry name" value="Tryptophan synthase beta chain"/>
    <property type="match status" value="1"/>
</dbReference>
<dbReference type="FunFam" id="3.40.50.1100:FF:000004">
    <property type="entry name" value="Tryptophan synthase beta chain"/>
    <property type="match status" value="1"/>
</dbReference>
<dbReference type="Gene3D" id="3.40.50.1100">
    <property type="match status" value="2"/>
</dbReference>
<dbReference type="HAMAP" id="MF_00133">
    <property type="entry name" value="Trp_synth_beta"/>
    <property type="match status" value="1"/>
</dbReference>
<dbReference type="InterPro" id="IPR006653">
    <property type="entry name" value="Trp_synth_b_CS"/>
</dbReference>
<dbReference type="InterPro" id="IPR006654">
    <property type="entry name" value="Trp_synth_beta"/>
</dbReference>
<dbReference type="InterPro" id="IPR023026">
    <property type="entry name" value="Trp_synth_beta/beta-like"/>
</dbReference>
<dbReference type="InterPro" id="IPR001926">
    <property type="entry name" value="TrpB-like_PALP"/>
</dbReference>
<dbReference type="InterPro" id="IPR036052">
    <property type="entry name" value="TrpB-like_PALP_sf"/>
</dbReference>
<dbReference type="NCBIfam" id="TIGR00263">
    <property type="entry name" value="trpB"/>
    <property type="match status" value="1"/>
</dbReference>
<dbReference type="PANTHER" id="PTHR48077:SF3">
    <property type="entry name" value="TRYPTOPHAN SYNTHASE"/>
    <property type="match status" value="1"/>
</dbReference>
<dbReference type="PANTHER" id="PTHR48077">
    <property type="entry name" value="TRYPTOPHAN SYNTHASE-RELATED"/>
    <property type="match status" value="1"/>
</dbReference>
<dbReference type="Pfam" id="PF00291">
    <property type="entry name" value="PALP"/>
    <property type="match status" value="1"/>
</dbReference>
<dbReference type="PIRSF" id="PIRSF001413">
    <property type="entry name" value="Trp_syn_beta"/>
    <property type="match status" value="1"/>
</dbReference>
<dbReference type="SUPFAM" id="SSF53686">
    <property type="entry name" value="Tryptophan synthase beta subunit-like PLP-dependent enzymes"/>
    <property type="match status" value="1"/>
</dbReference>
<dbReference type="PROSITE" id="PS00168">
    <property type="entry name" value="TRP_SYNTHASE_BETA"/>
    <property type="match status" value="1"/>
</dbReference>
<gene>
    <name evidence="2" type="primary">trpB</name>
    <name type="ordered locus">Z2550</name>
    <name type="ordered locus">ECs1833</name>
</gene>